<proteinExistence type="inferred from homology"/>
<protein>
    <recommendedName>
        <fullName evidence="1">Isoleucine--tRNA ligase</fullName>
        <ecNumber evidence="1">6.1.1.5</ecNumber>
    </recommendedName>
    <alternativeName>
        <fullName evidence="1">Isoleucyl-tRNA synthetase</fullName>
        <shortName evidence="1">IleRS</shortName>
    </alternativeName>
</protein>
<comment type="function">
    <text evidence="1">Catalyzes the attachment of isoleucine to tRNA(Ile). As IleRS can inadvertently accommodate and process structurally similar amino acids such as valine, to avoid such errors it has two additional distinct tRNA(Ile)-dependent editing activities. One activity is designated as 'pretransfer' editing and involves the hydrolysis of activated Val-AMP. The other activity is designated 'posttransfer' editing and involves deacylation of mischarged Val-tRNA(Ile).</text>
</comment>
<comment type="catalytic activity">
    <reaction evidence="1">
        <text>tRNA(Ile) + L-isoleucine + ATP = L-isoleucyl-tRNA(Ile) + AMP + diphosphate</text>
        <dbReference type="Rhea" id="RHEA:11060"/>
        <dbReference type="Rhea" id="RHEA-COMP:9666"/>
        <dbReference type="Rhea" id="RHEA-COMP:9695"/>
        <dbReference type="ChEBI" id="CHEBI:30616"/>
        <dbReference type="ChEBI" id="CHEBI:33019"/>
        <dbReference type="ChEBI" id="CHEBI:58045"/>
        <dbReference type="ChEBI" id="CHEBI:78442"/>
        <dbReference type="ChEBI" id="CHEBI:78528"/>
        <dbReference type="ChEBI" id="CHEBI:456215"/>
        <dbReference type="EC" id="6.1.1.5"/>
    </reaction>
</comment>
<comment type="cofactor">
    <cofactor evidence="1">
        <name>Zn(2+)</name>
        <dbReference type="ChEBI" id="CHEBI:29105"/>
    </cofactor>
    <text evidence="1">Binds 1 zinc ion per subunit.</text>
</comment>
<comment type="subunit">
    <text evidence="1">Monomer.</text>
</comment>
<comment type="subcellular location">
    <subcellularLocation>
        <location evidence="1">Cytoplasm</location>
    </subcellularLocation>
</comment>
<comment type="domain">
    <text evidence="1">IleRS has two distinct active sites: one for aminoacylation and one for editing. The misactivated valine is translocated from the active site to the editing site, which sterically excludes the correctly activated isoleucine. The single editing site contains two valyl binding pockets, one specific for each substrate (Val-AMP or Val-tRNA(Ile)).</text>
</comment>
<comment type="similarity">
    <text evidence="1">Belongs to the class-I aminoacyl-tRNA synthetase family. IleS type 1 subfamily.</text>
</comment>
<name>SYI_YERPA</name>
<gene>
    <name evidence="1" type="primary">ileS</name>
    <name type="ordered locus">YPA_4068</name>
</gene>
<organism>
    <name type="scientific">Yersinia pestis bv. Antiqua (strain Antiqua)</name>
    <dbReference type="NCBI Taxonomy" id="360102"/>
    <lineage>
        <taxon>Bacteria</taxon>
        <taxon>Pseudomonadati</taxon>
        <taxon>Pseudomonadota</taxon>
        <taxon>Gammaproteobacteria</taxon>
        <taxon>Enterobacterales</taxon>
        <taxon>Yersiniaceae</taxon>
        <taxon>Yersinia</taxon>
    </lineage>
</organism>
<dbReference type="EC" id="6.1.1.5" evidence="1"/>
<dbReference type="EMBL" id="CP000308">
    <property type="protein sequence ID" value="ABG16029.1"/>
    <property type="molecule type" value="Genomic_DNA"/>
</dbReference>
<dbReference type="RefSeq" id="WP_002210509.1">
    <property type="nucleotide sequence ID" value="NZ_CP009906.1"/>
</dbReference>
<dbReference type="SMR" id="Q1C0J3"/>
<dbReference type="GeneID" id="57974135"/>
<dbReference type="KEGG" id="ypa:YPA_4068"/>
<dbReference type="Proteomes" id="UP000001971">
    <property type="component" value="Chromosome"/>
</dbReference>
<dbReference type="GO" id="GO:0005829">
    <property type="term" value="C:cytosol"/>
    <property type="evidence" value="ECO:0007669"/>
    <property type="project" value="TreeGrafter"/>
</dbReference>
<dbReference type="GO" id="GO:0002161">
    <property type="term" value="F:aminoacyl-tRNA deacylase activity"/>
    <property type="evidence" value="ECO:0007669"/>
    <property type="project" value="InterPro"/>
</dbReference>
<dbReference type="GO" id="GO:0005524">
    <property type="term" value="F:ATP binding"/>
    <property type="evidence" value="ECO:0007669"/>
    <property type="project" value="UniProtKB-UniRule"/>
</dbReference>
<dbReference type="GO" id="GO:0004822">
    <property type="term" value="F:isoleucine-tRNA ligase activity"/>
    <property type="evidence" value="ECO:0007669"/>
    <property type="project" value="UniProtKB-UniRule"/>
</dbReference>
<dbReference type="GO" id="GO:0000049">
    <property type="term" value="F:tRNA binding"/>
    <property type="evidence" value="ECO:0007669"/>
    <property type="project" value="InterPro"/>
</dbReference>
<dbReference type="GO" id="GO:0008270">
    <property type="term" value="F:zinc ion binding"/>
    <property type="evidence" value="ECO:0007669"/>
    <property type="project" value="UniProtKB-UniRule"/>
</dbReference>
<dbReference type="GO" id="GO:0006428">
    <property type="term" value="P:isoleucyl-tRNA aminoacylation"/>
    <property type="evidence" value="ECO:0007669"/>
    <property type="project" value="UniProtKB-UniRule"/>
</dbReference>
<dbReference type="CDD" id="cd07960">
    <property type="entry name" value="Anticodon_Ia_Ile_BEm"/>
    <property type="match status" value="1"/>
</dbReference>
<dbReference type="CDD" id="cd00818">
    <property type="entry name" value="IleRS_core"/>
    <property type="match status" value="1"/>
</dbReference>
<dbReference type="FunFam" id="1.10.730.20:FF:000001">
    <property type="entry name" value="Isoleucine--tRNA ligase"/>
    <property type="match status" value="1"/>
</dbReference>
<dbReference type="FunFam" id="3.40.50.620:FF:000042">
    <property type="entry name" value="Isoleucine--tRNA ligase"/>
    <property type="match status" value="1"/>
</dbReference>
<dbReference type="FunFam" id="3.40.50.620:FF:000048">
    <property type="entry name" value="Isoleucine--tRNA ligase"/>
    <property type="match status" value="1"/>
</dbReference>
<dbReference type="FunFam" id="3.90.740.10:FF:000002">
    <property type="entry name" value="Isoleucine--tRNA ligase"/>
    <property type="match status" value="1"/>
</dbReference>
<dbReference type="Gene3D" id="1.10.730.20">
    <property type="match status" value="1"/>
</dbReference>
<dbReference type="Gene3D" id="3.40.50.620">
    <property type="entry name" value="HUPs"/>
    <property type="match status" value="2"/>
</dbReference>
<dbReference type="Gene3D" id="3.90.740.10">
    <property type="entry name" value="Valyl/Leucyl/Isoleucyl-tRNA synthetase, editing domain"/>
    <property type="match status" value="1"/>
</dbReference>
<dbReference type="HAMAP" id="MF_02002">
    <property type="entry name" value="Ile_tRNA_synth_type1"/>
    <property type="match status" value="1"/>
</dbReference>
<dbReference type="InterPro" id="IPR001412">
    <property type="entry name" value="aa-tRNA-synth_I_CS"/>
</dbReference>
<dbReference type="InterPro" id="IPR002300">
    <property type="entry name" value="aa-tRNA-synth_Ia"/>
</dbReference>
<dbReference type="InterPro" id="IPR033708">
    <property type="entry name" value="Anticodon_Ile_BEm"/>
</dbReference>
<dbReference type="InterPro" id="IPR002301">
    <property type="entry name" value="Ile-tRNA-ligase"/>
</dbReference>
<dbReference type="InterPro" id="IPR023585">
    <property type="entry name" value="Ile-tRNA-ligase_type1"/>
</dbReference>
<dbReference type="InterPro" id="IPR050081">
    <property type="entry name" value="Ile-tRNA_ligase"/>
</dbReference>
<dbReference type="InterPro" id="IPR013155">
    <property type="entry name" value="M/V/L/I-tRNA-synth_anticd-bd"/>
</dbReference>
<dbReference type="InterPro" id="IPR014729">
    <property type="entry name" value="Rossmann-like_a/b/a_fold"/>
</dbReference>
<dbReference type="InterPro" id="IPR009080">
    <property type="entry name" value="tRNAsynth_Ia_anticodon-bd"/>
</dbReference>
<dbReference type="InterPro" id="IPR009008">
    <property type="entry name" value="Val/Leu/Ile-tRNA-synth_edit"/>
</dbReference>
<dbReference type="InterPro" id="IPR010663">
    <property type="entry name" value="Znf_FPG/IleRS"/>
</dbReference>
<dbReference type="NCBIfam" id="TIGR00392">
    <property type="entry name" value="ileS"/>
    <property type="match status" value="1"/>
</dbReference>
<dbReference type="PANTHER" id="PTHR42765:SF1">
    <property type="entry name" value="ISOLEUCINE--TRNA LIGASE, MITOCHONDRIAL"/>
    <property type="match status" value="1"/>
</dbReference>
<dbReference type="PANTHER" id="PTHR42765">
    <property type="entry name" value="SOLEUCYL-TRNA SYNTHETASE"/>
    <property type="match status" value="1"/>
</dbReference>
<dbReference type="Pfam" id="PF08264">
    <property type="entry name" value="Anticodon_1"/>
    <property type="match status" value="1"/>
</dbReference>
<dbReference type="Pfam" id="PF00133">
    <property type="entry name" value="tRNA-synt_1"/>
    <property type="match status" value="1"/>
</dbReference>
<dbReference type="Pfam" id="PF06827">
    <property type="entry name" value="zf-FPG_IleRS"/>
    <property type="match status" value="1"/>
</dbReference>
<dbReference type="PRINTS" id="PR00984">
    <property type="entry name" value="TRNASYNTHILE"/>
</dbReference>
<dbReference type="SUPFAM" id="SSF47323">
    <property type="entry name" value="Anticodon-binding domain of a subclass of class I aminoacyl-tRNA synthetases"/>
    <property type="match status" value="1"/>
</dbReference>
<dbReference type="SUPFAM" id="SSF52374">
    <property type="entry name" value="Nucleotidylyl transferase"/>
    <property type="match status" value="1"/>
</dbReference>
<dbReference type="SUPFAM" id="SSF50677">
    <property type="entry name" value="ValRS/IleRS/LeuRS editing domain"/>
    <property type="match status" value="1"/>
</dbReference>
<dbReference type="PROSITE" id="PS00178">
    <property type="entry name" value="AA_TRNA_LIGASE_I"/>
    <property type="match status" value="1"/>
</dbReference>
<keyword id="KW-0030">Aminoacyl-tRNA synthetase</keyword>
<keyword id="KW-0067">ATP-binding</keyword>
<keyword id="KW-0963">Cytoplasm</keyword>
<keyword id="KW-0436">Ligase</keyword>
<keyword id="KW-0479">Metal-binding</keyword>
<keyword id="KW-0547">Nucleotide-binding</keyword>
<keyword id="KW-0648">Protein biosynthesis</keyword>
<keyword id="KW-0862">Zinc</keyword>
<sequence>MSDYKNTLNLPETGFPMRGDLAKREPDMLKRWYEQDLYGIIRAAKKGKKTFILHDGPPYANGNIHIGHSVNKILKDIIVKSKGMAGYDSPYIPGWDCHGLPIELKVEQLIGKPGEKVSAAEFRTACRKYAAEQVEGQKKDFIRLGVLGDWDHPYLTMDFKTEANIIRALSKIIDNGHLHKGAKPVHWCTDCGSSLAEAEVEYYDKTSQSIDVRFNAVDTATVAAKFGVSAVNGPISLVIWTTTPWTLPANRAISLNAEYLYQLVQVEGECLILAADLVESVMKRAGITQWAVLGSCTGSDLELLRFTHPFMGFDVPAILGDHVTLDAGTGAVHTAPGHGPDDFVIGQKYGLEVANPVGPNGCYLAGTYPTLDGLFVFKANDVVVELLREKGALLHVEKLLHSYPCCWRHKTPIIFRATPQWFISMDQKGLRKQSLQEIKGVQWIPDWGQARIETMVANRPDWCISRQRTWGVPMSLFVHKETEQLHPRSIELMEEVAKRVEQDGIQAWWDLDPAEILGADAADYVKVPDTLDVWFDSGSTHSSVVDVRPEFGGHSPDMYLEGSDQHRGWFMSSLMIATAMKGKAPYRQVLTHGFTVDGQGRKMSKSIGNTISPQDVMNKLGGDILRLWVASTDYTGEIAVSDEILKRSADSYRRIRNTARFLLANLNGFDPAQHQVKPEEMVVVDRWAVGRAQAAQAEIMEAYENYDFHLVVQRLMQFCSVEMGSFYLDIIKDRQYTAKGDGIARRSCQTALFHIAEALVRWMAPIMSFTADEIWNHLPGERQQYVFTEEWYDGLFGLAGNESMNDTFWAELLKVRGEVNKVLEQARSDKRIGGSLEAAVTLYAEPELAARLNSLQDELRFVLLTSAAKVAAYADAGNDAQQSELIAGLKITFNKADGEKCPRCWHYTQDVGLVAEHAELCGRCVTNVAGDGEERKFA</sequence>
<reference key="1">
    <citation type="journal article" date="2006" name="J. Bacteriol.">
        <title>Complete genome sequence of Yersinia pestis strains Antiqua and Nepal516: evidence of gene reduction in an emerging pathogen.</title>
        <authorList>
            <person name="Chain P.S.G."/>
            <person name="Hu P."/>
            <person name="Malfatti S.A."/>
            <person name="Radnedge L."/>
            <person name="Larimer F."/>
            <person name="Vergez L.M."/>
            <person name="Worsham P."/>
            <person name="Chu M.C."/>
            <person name="Andersen G.L."/>
        </authorList>
    </citation>
    <scope>NUCLEOTIDE SEQUENCE [LARGE SCALE GENOMIC DNA]</scope>
    <source>
        <strain>Antiqua</strain>
    </source>
</reference>
<evidence type="ECO:0000255" key="1">
    <source>
        <dbReference type="HAMAP-Rule" id="MF_02002"/>
    </source>
</evidence>
<accession>Q1C0J3</accession>
<feature type="chain" id="PRO_1000022144" description="Isoleucine--tRNA ligase">
    <location>
        <begin position="1"/>
        <end position="938"/>
    </location>
</feature>
<feature type="short sequence motif" description="'HIGH' region">
    <location>
        <begin position="58"/>
        <end position="68"/>
    </location>
</feature>
<feature type="short sequence motif" description="'KMSKS' region">
    <location>
        <begin position="602"/>
        <end position="606"/>
    </location>
</feature>
<feature type="binding site" evidence="1">
    <location>
        <position position="561"/>
    </location>
    <ligand>
        <name>L-isoleucyl-5'-AMP</name>
        <dbReference type="ChEBI" id="CHEBI:178002"/>
    </ligand>
</feature>
<feature type="binding site" evidence="1">
    <location>
        <position position="605"/>
    </location>
    <ligand>
        <name>ATP</name>
        <dbReference type="ChEBI" id="CHEBI:30616"/>
    </ligand>
</feature>
<feature type="binding site" evidence="1">
    <location>
        <position position="901"/>
    </location>
    <ligand>
        <name>Zn(2+)</name>
        <dbReference type="ChEBI" id="CHEBI:29105"/>
    </ligand>
</feature>
<feature type="binding site" evidence="1">
    <location>
        <position position="904"/>
    </location>
    <ligand>
        <name>Zn(2+)</name>
        <dbReference type="ChEBI" id="CHEBI:29105"/>
    </ligand>
</feature>
<feature type="binding site" evidence="1">
    <location>
        <position position="921"/>
    </location>
    <ligand>
        <name>Zn(2+)</name>
        <dbReference type="ChEBI" id="CHEBI:29105"/>
    </ligand>
</feature>
<feature type="binding site" evidence="1">
    <location>
        <position position="924"/>
    </location>
    <ligand>
        <name>Zn(2+)</name>
        <dbReference type="ChEBI" id="CHEBI:29105"/>
    </ligand>
</feature>